<organism>
    <name type="scientific">Azotobacter vinelandii (strain DJ / ATCC BAA-1303)</name>
    <dbReference type="NCBI Taxonomy" id="322710"/>
    <lineage>
        <taxon>Bacteria</taxon>
        <taxon>Pseudomonadati</taxon>
        <taxon>Pseudomonadota</taxon>
        <taxon>Gammaproteobacteria</taxon>
        <taxon>Pseudomonadales</taxon>
        <taxon>Pseudomonadaceae</taxon>
        <taxon>Azotobacter</taxon>
    </lineage>
</organism>
<feature type="chain" id="PRO_1000213222" description="1-(5-phosphoribosyl)-5-[(5-phosphoribosylamino)methylideneamino] imidazole-4-carboxamide isomerase">
    <location>
        <begin position="1"/>
        <end position="245"/>
    </location>
</feature>
<feature type="active site" description="Proton acceptor" evidence="1">
    <location>
        <position position="8"/>
    </location>
</feature>
<feature type="active site" description="Proton donor" evidence="1">
    <location>
        <position position="130"/>
    </location>
</feature>
<proteinExistence type="inferred from homology"/>
<gene>
    <name evidence="1" type="primary">hisA</name>
    <name type="ordered locus">Avin_04620</name>
</gene>
<sequence length="245" mass="25822">MLIIPAIDLKDGACVRLRQGRMDDSTVFSDDPVAMAARWVEAGCRRLHLVDLNGAFEGQPINGEVVTAIARRYPDLPIQIGGGIRSLETIEHYVKAGVGYVIIGTKAVKQPEFVGEACRAFPGKVIVGLDARDGFVATDGWAEVSSVQVVDLARRFEADGVSAIVYTDIAKDGMMQGCNVEATAALAAATRIPVIASGGIHDLGDIRKLLDARAPGIVGAITGRAIYEGTLDVAEAQALCDGFKG</sequence>
<comment type="catalytic activity">
    <reaction evidence="1">
        <text>1-(5-phospho-beta-D-ribosyl)-5-[(5-phospho-beta-D-ribosylamino)methylideneamino]imidazole-4-carboxamide = 5-[(5-phospho-1-deoxy-D-ribulos-1-ylimino)methylamino]-1-(5-phospho-beta-D-ribosyl)imidazole-4-carboxamide</text>
        <dbReference type="Rhea" id="RHEA:15469"/>
        <dbReference type="ChEBI" id="CHEBI:58435"/>
        <dbReference type="ChEBI" id="CHEBI:58525"/>
        <dbReference type="EC" id="5.3.1.16"/>
    </reaction>
</comment>
<comment type="pathway">
    <text evidence="1">Amino-acid biosynthesis; L-histidine biosynthesis; L-histidine from 5-phospho-alpha-D-ribose 1-diphosphate: step 4/9.</text>
</comment>
<comment type="subcellular location">
    <subcellularLocation>
        <location evidence="1">Cytoplasm</location>
    </subcellularLocation>
</comment>
<comment type="similarity">
    <text evidence="1">Belongs to the HisA/HisF family.</text>
</comment>
<reference key="1">
    <citation type="journal article" date="2009" name="J. Bacteriol.">
        <title>Genome sequence of Azotobacter vinelandii, an obligate aerobe specialized to support diverse anaerobic metabolic processes.</title>
        <authorList>
            <person name="Setubal J.C."/>
            <person name="Dos Santos P."/>
            <person name="Goldman B.S."/>
            <person name="Ertesvaag H."/>
            <person name="Espin G."/>
            <person name="Rubio L.M."/>
            <person name="Valla S."/>
            <person name="Almeida N.F."/>
            <person name="Balasubramanian D."/>
            <person name="Cromes L."/>
            <person name="Curatti L."/>
            <person name="Du Z."/>
            <person name="Godsy E."/>
            <person name="Goodner B."/>
            <person name="Hellner-Burris K."/>
            <person name="Hernandez J.A."/>
            <person name="Houmiel K."/>
            <person name="Imperial J."/>
            <person name="Kennedy C."/>
            <person name="Larson T.J."/>
            <person name="Latreille P."/>
            <person name="Ligon L.S."/>
            <person name="Lu J."/>
            <person name="Maerk M."/>
            <person name="Miller N.M."/>
            <person name="Norton S."/>
            <person name="O'Carroll I.P."/>
            <person name="Paulsen I."/>
            <person name="Raulfs E.C."/>
            <person name="Roemer R."/>
            <person name="Rosser J."/>
            <person name="Segura D."/>
            <person name="Slater S."/>
            <person name="Stricklin S.L."/>
            <person name="Studholme D.J."/>
            <person name="Sun J."/>
            <person name="Viana C.J."/>
            <person name="Wallin E."/>
            <person name="Wang B."/>
            <person name="Wheeler C."/>
            <person name="Zhu H."/>
            <person name="Dean D.R."/>
            <person name="Dixon R."/>
            <person name="Wood D."/>
        </authorList>
    </citation>
    <scope>NUCLEOTIDE SEQUENCE [LARGE SCALE GENOMIC DNA]</scope>
    <source>
        <strain>DJ / ATCC BAA-1303</strain>
    </source>
</reference>
<name>HIS4_AZOVD</name>
<dbReference type="EC" id="5.3.1.16" evidence="1"/>
<dbReference type="EMBL" id="CP001157">
    <property type="protein sequence ID" value="ACO76717.1"/>
    <property type="molecule type" value="Genomic_DNA"/>
</dbReference>
<dbReference type="RefSeq" id="WP_012699145.1">
    <property type="nucleotide sequence ID" value="NC_012560.1"/>
</dbReference>
<dbReference type="SMR" id="C1DJD2"/>
<dbReference type="STRING" id="322710.Avin_04620"/>
<dbReference type="EnsemblBacteria" id="ACO76717">
    <property type="protein sequence ID" value="ACO76717"/>
    <property type="gene ID" value="Avin_04620"/>
</dbReference>
<dbReference type="GeneID" id="88183892"/>
<dbReference type="KEGG" id="avn:Avin_04620"/>
<dbReference type="eggNOG" id="COG0106">
    <property type="taxonomic scope" value="Bacteria"/>
</dbReference>
<dbReference type="HOGENOM" id="CLU_048577_1_1_6"/>
<dbReference type="OrthoDB" id="9807749at2"/>
<dbReference type="UniPathway" id="UPA00031">
    <property type="reaction ID" value="UER00009"/>
</dbReference>
<dbReference type="Proteomes" id="UP000002424">
    <property type="component" value="Chromosome"/>
</dbReference>
<dbReference type="GO" id="GO:0005737">
    <property type="term" value="C:cytoplasm"/>
    <property type="evidence" value="ECO:0007669"/>
    <property type="project" value="UniProtKB-SubCell"/>
</dbReference>
<dbReference type="GO" id="GO:0003949">
    <property type="term" value="F:1-(5-phosphoribosyl)-5-[(5-phosphoribosylamino)methylideneamino]imidazole-4-carboxamide isomerase activity"/>
    <property type="evidence" value="ECO:0007669"/>
    <property type="project" value="UniProtKB-UniRule"/>
</dbReference>
<dbReference type="GO" id="GO:0000105">
    <property type="term" value="P:L-histidine biosynthetic process"/>
    <property type="evidence" value="ECO:0007669"/>
    <property type="project" value="UniProtKB-UniRule"/>
</dbReference>
<dbReference type="GO" id="GO:0000162">
    <property type="term" value="P:L-tryptophan biosynthetic process"/>
    <property type="evidence" value="ECO:0007669"/>
    <property type="project" value="TreeGrafter"/>
</dbReference>
<dbReference type="CDD" id="cd04732">
    <property type="entry name" value="HisA"/>
    <property type="match status" value="1"/>
</dbReference>
<dbReference type="FunFam" id="3.20.20.70:FF:000009">
    <property type="entry name" value="1-(5-phosphoribosyl)-5-[(5-phosphoribosylamino)methylideneamino] imidazole-4-carboxamide isomerase"/>
    <property type="match status" value="1"/>
</dbReference>
<dbReference type="Gene3D" id="3.20.20.70">
    <property type="entry name" value="Aldolase class I"/>
    <property type="match status" value="1"/>
</dbReference>
<dbReference type="HAMAP" id="MF_01014">
    <property type="entry name" value="HisA"/>
    <property type="match status" value="1"/>
</dbReference>
<dbReference type="InterPro" id="IPR013785">
    <property type="entry name" value="Aldolase_TIM"/>
</dbReference>
<dbReference type="InterPro" id="IPR006062">
    <property type="entry name" value="His_biosynth"/>
</dbReference>
<dbReference type="InterPro" id="IPR006063">
    <property type="entry name" value="HisA_bact_arch"/>
</dbReference>
<dbReference type="InterPro" id="IPR044524">
    <property type="entry name" value="Isoase_HisA-like"/>
</dbReference>
<dbReference type="InterPro" id="IPR023016">
    <property type="entry name" value="Isoase_HisA-like_bact"/>
</dbReference>
<dbReference type="InterPro" id="IPR011060">
    <property type="entry name" value="RibuloseP-bd_barrel"/>
</dbReference>
<dbReference type="NCBIfam" id="TIGR00007">
    <property type="entry name" value="1-(5-phosphoribosyl)-5-[(5-phosphoribosylamino)methylideneamino]imidazole-4-carboxamide isomerase"/>
    <property type="match status" value="1"/>
</dbReference>
<dbReference type="PANTHER" id="PTHR43090">
    <property type="entry name" value="1-(5-PHOSPHORIBOSYL)-5-[(5-PHOSPHORIBOSYLAMINO)METHYLIDENEAMINO] IMIDAZOLE-4-CARBOXAMIDE ISOMERASE"/>
    <property type="match status" value="1"/>
</dbReference>
<dbReference type="PANTHER" id="PTHR43090:SF2">
    <property type="entry name" value="1-(5-PHOSPHORIBOSYL)-5-[(5-PHOSPHORIBOSYLAMINO)METHYLIDENEAMINO] IMIDAZOLE-4-CARBOXAMIDE ISOMERASE"/>
    <property type="match status" value="1"/>
</dbReference>
<dbReference type="Pfam" id="PF00977">
    <property type="entry name" value="His_biosynth"/>
    <property type="match status" value="1"/>
</dbReference>
<dbReference type="SUPFAM" id="SSF51366">
    <property type="entry name" value="Ribulose-phoshate binding barrel"/>
    <property type="match status" value="1"/>
</dbReference>
<accession>C1DJD2</accession>
<keyword id="KW-0028">Amino-acid biosynthesis</keyword>
<keyword id="KW-0963">Cytoplasm</keyword>
<keyword id="KW-0368">Histidine biosynthesis</keyword>
<keyword id="KW-0413">Isomerase</keyword>
<protein>
    <recommendedName>
        <fullName evidence="1">1-(5-phosphoribosyl)-5-[(5-phosphoribosylamino)methylideneamino] imidazole-4-carboxamide isomerase</fullName>
        <ecNumber evidence="1">5.3.1.16</ecNumber>
    </recommendedName>
    <alternativeName>
        <fullName evidence="1">Phosphoribosylformimino-5-aminoimidazole carboxamide ribotide isomerase</fullName>
    </alternativeName>
</protein>
<evidence type="ECO:0000255" key="1">
    <source>
        <dbReference type="HAMAP-Rule" id="MF_01014"/>
    </source>
</evidence>